<gene>
    <name type="primary">NHERF1</name>
    <name type="synonym">NHERF</name>
</gene>
<protein>
    <recommendedName>
        <fullName>Na(+)/H(+) exchange regulatory cofactor NHE-RF1</fullName>
        <shortName>NHERF-1</shortName>
    </recommendedName>
    <alternativeName>
        <fullName>Ezrin-radixin-moesin-binding phosphoprotein 50</fullName>
        <shortName>EBP50</shortName>
    </alternativeName>
    <alternativeName>
        <fullName>Regulatory cofactor of Na(+)/H(+) exchanger</fullName>
    </alternativeName>
    <alternativeName>
        <fullName>Sodium-hydrogen exchanger regulatory factor 1</fullName>
    </alternativeName>
    <alternativeName>
        <fullName>Solute carrier family 9 isoform A3 regulatory factor 1</fullName>
    </alternativeName>
</protein>
<sequence>MSADAAAGAPLPRLCCLEKGPNGYGFHLHGEKGKVGQYIRLVEPGSPAEKAGLLAGDRLVEVNGENVEKETHQQVVSRIRAALNAVRLLVVDPDTDEQFRKLGVQIRGELLRAQAGPEQAGPPAAPGEQGPAGENEPREVEKSHPERRELRPRLCAMKKGPNGYGFNLHSDKSRPGQFIRAVDPDSPAEASGLREQDRIVEVNGVCVEGKQHGDVVTAIKAGGDEAKLLVVDKETDEFFKKCKVVPSSEHLNGPLPEPFTNGEIQKNNPETLAPAASESPRPALARSASSDTSEELASQDSPKKEDSTAPSSTSSSSDPILDFSISLAVAKERAHQKRSSRRAPQMDWSEKKELFSNL</sequence>
<keyword id="KW-0007">Acetylation</keyword>
<keyword id="KW-1003">Cell membrane</keyword>
<keyword id="KW-0966">Cell projection</keyword>
<keyword id="KW-0963">Cytoplasm</keyword>
<keyword id="KW-0472">Membrane</keyword>
<keyword id="KW-0597">Phosphoprotein</keyword>
<keyword id="KW-1185">Reference proteome</keyword>
<keyword id="KW-0677">Repeat</keyword>
<keyword id="KW-0879">Wnt signaling pathway</keyword>
<proteinExistence type="evidence at protein level"/>
<organism>
    <name type="scientific">Oryctolagus cuniculus</name>
    <name type="common">Rabbit</name>
    <dbReference type="NCBI Taxonomy" id="9986"/>
    <lineage>
        <taxon>Eukaryota</taxon>
        <taxon>Metazoa</taxon>
        <taxon>Chordata</taxon>
        <taxon>Craniata</taxon>
        <taxon>Vertebrata</taxon>
        <taxon>Euteleostomi</taxon>
        <taxon>Mammalia</taxon>
        <taxon>Eutheria</taxon>
        <taxon>Euarchontoglires</taxon>
        <taxon>Glires</taxon>
        <taxon>Lagomorpha</taxon>
        <taxon>Leporidae</taxon>
        <taxon>Oryctolagus</taxon>
    </lineage>
</organism>
<name>NHRF1_RABIT</name>
<reference key="1">
    <citation type="journal article" date="1995" name="J. Clin. Invest.">
        <title>Characterization of a protein cofactor that mediates protein kinase A regulation of the renal brush border membrane Na(+)-H+ exchanger.</title>
        <authorList>
            <person name="Weinman E.J."/>
            <person name="Steplock D."/>
            <person name="Wang Y."/>
            <person name="Shenolikar S."/>
        </authorList>
    </citation>
    <scope>NUCLEOTIDE SEQUENCE [MRNA]</scope>
    <scope>TISSUE SPECIFICITY</scope>
    <source>
        <strain>New Zealand white</strain>
        <tissue>Kidney cortex</tissue>
    </source>
</reference>
<reference key="2">
    <citation type="journal article" date="1998" name="Nature">
        <title>The beta2-adrenergic receptor interacts with the Na+/H+-exchanger regulatory factor to control Na+/H+ exchange.</title>
        <authorList>
            <person name="Hall R.A."/>
            <person name="Premont R.T."/>
            <person name="Chow C.-W."/>
            <person name="Blitzer J.T."/>
            <person name="Pitcher J.A."/>
            <person name="Claing A."/>
            <person name="Stoffel R.H."/>
            <person name="Barak L.S."/>
            <person name="Shenolikar S."/>
            <person name="Weinman E.J."/>
            <person name="Grinstein S."/>
            <person name="Lefkowitz R.J."/>
        </authorList>
    </citation>
    <scope>FUNCTION</scope>
    <scope>SUBCELLULAR LOCATION</scope>
    <scope>INTERACTION WITH SLC9A3 AND ADRB2</scope>
</reference>
<reference key="3">
    <citation type="journal article" date="1999" name="J. Biol. Chem.">
        <title>cAMP-induced phosphorylation and inhibition of Na(+)/H(+) exchanger 3 (NHE3) are dependent on the presence but not the phosphorylation of NHE regulatory factor.</title>
        <authorList>
            <person name="Zizak M."/>
            <person name="Lamprecht G."/>
            <person name="Steplock D."/>
            <person name="Tariq N."/>
            <person name="Shenolikar S."/>
            <person name="Donowitz M."/>
            <person name="Yun C.H.C."/>
            <person name="Weinman E.J."/>
        </authorList>
    </citation>
    <scope>FUNCTION</scope>
    <scope>INTERACTION WITH SLC9A3</scope>
    <scope>MUTAGENESIS OF SER-287 AND 289-SER-SER-290</scope>
    <scope>PHOSPHORYLATION AT SER-289 AND SER-290</scope>
</reference>
<reference key="4">
    <citation type="journal article" date="2001" name="Biochemistry">
        <title>Oligomerization of NHERF-1 and NHERF-2 PDZ domains: differential regulation by association with receptor carboxyl-termini and by phosphorylation.</title>
        <authorList>
            <person name="Lau A.G."/>
            <person name="Hall R.A."/>
        </authorList>
    </citation>
    <scope>DIMERIZATION</scope>
    <scope>INTERACTION WITH ADRB2</scope>
    <scope>MUTAGENESIS OF SER-289</scope>
</reference>
<comment type="function">
    <text evidence="1 6 9">Scaffold protein that connects plasma membrane proteins with members of the ezrin/moesin/radixin family and thereby helps to link them to the actin cytoskeleton and to regulate their surface expression. Necessary for recycling of internalized ADRB2. Was first known to play a role in the regulation of the activity and subcellular location of SLC9A3. Necessary for cAMP-mediated phosphorylation and inhibition of SLC9A3. Involved in sperm capacitation. May participate in the regulation of the chloride and bicarbonate homeostasis in spermatozoa. May enhance Wnt signaling. May participate in HTR4 targeting to microvilli (By similarity). Involved in the regulation of phosphate reabsorption in the renal proximal tubules (By similarity).</text>
</comment>
<comment type="subunit">
    <text evidence="2 3">Homodimer, and heterodimer with NHERF2. Binds the N-termini of EZR, RDX and MSN. Binds the C-termini of PDGFRA, PDGFRB, ADRB2, NOS2 and CFTR. Binds ARHGAP17, EPI64, RACK1, OPRK1, GNAQ, CTNNB1 and PLCB3. Binds PDZK1 (By similarity). Interacts with CLCN3. Binds the C-terminus of PAG1. In resting T-cells, part of a PAG1-NHERF1-MSN complex which is disrupted upon TCR activation. Forms a complex with CFTR and SLC4A7. Forms a complex with SLC4A7 and ATP6V1B1. Interacts with TRPC4 (via the PDZ-binding domain). Directly interacts with HTR4 (By similarity). Interacts (via the PDZ 1 domain) with PODXL (via the C-terminal PDZ-binding motif DTHL); interaction is not detected in glomerular epithelium cells. Interacts (via the PDZ 1 domain) with PODXL (via the C-terminal PDZ-binding motif DTHL); the interaction take place early in the secretory pathway and is necessary for its apical membrane sorting (By similarity). Interacts with SLC26A3 (By similarity). Interacts with MCC. Interacts with SLC34A1. Interacts (via the PDZ domains) with SLC26A6 isoform 4 and isoform 5 (By similarity). Interacts (via PDZ domains) with ACE2 (via PDZ-binding motif); the interaction may enhance ACE2 membrane residence (By similarity).</text>
</comment>
<comment type="interaction">
    <interactant intactId="EBI-7073613">
        <id>Q28619</id>
    </interactant>
    <interactant intactId="EBI-7073604">
        <id>O70293-1</id>
        <label>Grk6</label>
    </interactant>
    <organismsDiffer>true</organismsDiffer>
    <experiments>5</experiments>
</comment>
<comment type="subcellular location">
    <subcellularLocation>
        <location evidence="1">Cytoplasm</location>
    </subcellularLocation>
    <subcellularLocation>
        <location evidence="1">Apical cell membrane</location>
    </subcellularLocation>
    <subcellularLocation>
        <location evidence="1">Cell projection</location>
        <location evidence="1">Filopodium</location>
    </subcellularLocation>
    <subcellularLocation>
        <location evidence="1">Cell projection</location>
        <location evidence="1">Ruffle</location>
    </subcellularLocation>
    <subcellularLocation>
        <location evidence="1">Cell projection</location>
        <location evidence="1">Microvillus</location>
    </subcellularLocation>
    <subcellularLocation>
        <location evidence="1">Endomembrane system</location>
        <topology evidence="1">Peripheral membrane protein</topology>
    </subcellularLocation>
    <text evidence="1">Colocalizes with actin in microvilli-rich apical regions of the syncytiotrophoblast. Present in lipid rafts of T-cells. Translocates from the cytoplasm to the apical cell membrane in a PODXL-dependent manner (By similarity). Colocalizes with CFTR at the midpiece of sperm tail (By similarity).</text>
</comment>
<comment type="tissue specificity">
    <text evidence="8">Detected in ileum, duodenum and in kidney, where it is found in the glomerulus, the proximal tubule, the thick ascending limb of Henle's loop and the cortical collecting duct.</text>
</comment>
<comment type="PTM">
    <text evidence="6">Phosphorylated on serine residues.</text>
</comment>
<feature type="initiator methionine" description="Removed" evidence="2">
    <location>
        <position position="1"/>
    </location>
</feature>
<feature type="chain" id="PRO_0000096801" description="Na(+)/H(+) exchange regulatory cofactor NHE-RF1">
    <location>
        <begin position="2"/>
        <end position="358"/>
    </location>
</feature>
<feature type="domain" description="PDZ 1" evidence="4">
    <location>
        <begin position="14"/>
        <end position="94"/>
    </location>
</feature>
<feature type="domain" description="PDZ 2" evidence="4">
    <location>
        <begin position="154"/>
        <end position="234"/>
    </location>
</feature>
<feature type="region of interest" description="Disordered" evidence="5">
    <location>
        <begin position="114"/>
        <end position="151"/>
    </location>
</feature>
<feature type="region of interest" description="Disordered" evidence="5">
    <location>
        <begin position="247"/>
        <end position="358"/>
    </location>
</feature>
<feature type="compositionally biased region" description="Low complexity" evidence="5">
    <location>
        <begin position="114"/>
        <end position="134"/>
    </location>
</feature>
<feature type="compositionally biased region" description="Basic and acidic residues" evidence="5">
    <location>
        <begin position="135"/>
        <end position="151"/>
    </location>
</feature>
<feature type="compositionally biased region" description="Low complexity" evidence="5">
    <location>
        <begin position="272"/>
        <end position="290"/>
    </location>
</feature>
<feature type="compositionally biased region" description="Low complexity" evidence="5">
    <location>
        <begin position="308"/>
        <end position="327"/>
    </location>
</feature>
<feature type="compositionally biased region" description="Basic and acidic residues" evidence="5">
    <location>
        <begin position="348"/>
        <end position="358"/>
    </location>
</feature>
<feature type="modified residue" description="N-acetylserine" evidence="2">
    <location>
        <position position="2"/>
    </location>
</feature>
<feature type="modified residue" description="Phosphoserine" evidence="2">
    <location>
        <position position="2"/>
    </location>
</feature>
<feature type="modified residue" description="Phosphoserine" evidence="2">
    <location>
        <position position="46"/>
    </location>
</feature>
<feature type="modified residue" description="Phosphoserine" evidence="2">
    <location>
        <position position="279"/>
    </location>
</feature>
<feature type="modified residue" description="Phosphoserine" evidence="6">
    <location>
        <position position="289"/>
    </location>
</feature>
<feature type="modified residue" description="Phosphoserine" evidence="6">
    <location>
        <position position="290"/>
    </location>
</feature>
<feature type="modified residue" description="Phosphothreonine" evidence="3">
    <location>
        <position position="292"/>
    </location>
</feature>
<feature type="modified residue" description="Phosphoserine" evidence="2">
    <location>
        <position position="293"/>
    </location>
</feature>
<feature type="modified residue" description="Phosphoserine" evidence="3">
    <location>
        <position position="298"/>
    </location>
</feature>
<feature type="modified residue" description="Phosphoserine" evidence="3">
    <location>
        <position position="301"/>
    </location>
</feature>
<feature type="mutagenesis site" description="Abolishes phosphorylation; when associated with A-289 and A-290." evidence="6">
    <original>S</original>
    <variation>A</variation>
    <location>
        <position position="287"/>
    </location>
</feature>
<feature type="mutagenesis site" description="Abolishes phosphorylation; when associated with A-287." evidence="6">
    <original>SS</original>
    <variation>AA</variation>
    <location>
        <begin position="289"/>
        <end position="290"/>
    </location>
</feature>
<feature type="mutagenesis site" description="Enhances dimerization." evidence="7">
    <original>S</original>
    <variation>D</variation>
    <location>
        <position position="289"/>
    </location>
</feature>
<accession>Q28619</accession>
<evidence type="ECO:0000250" key="1"/>
<evidence type="ECO:0000250" key="2">
    <source>
        <dbReference type="UniProtKB" id="O14745"/>
    </source>
</evidence>
<evidence type="ECO:0000250" key="3">
    <source>
        <dbReference type="UniProtKB" id="P70441"/>
    </source>
</evidence>
<evidence type="ECO:0000255" key="4">
    <source>
        <dbReference type="PROSITE-ProRule" id="PRU00143"/>
    </source>
</evidence>
<evidence type="ECO:0000256" key="5">
    <source>
        <dbReference type="SAM" id="MobiDB-lite"/>
    </source>
</evidence>
<evidence type="ECO:0000269" key="6">
    <source>
    </source>
</evidence>
<evidence type="ECO:0000269" key="7">
    <source>
    </source>
</evidence>
<evidence type="ECO:0000269" key="8">
    <source>
    </source>
</evidence>
<evidence type="ECO:0000269" key="9">
    <source>
    </source>
</evidence>
<dbReference type="EMBL" id="U19815">
    <property type="protein sequence ID" value="AAA80218.1"/>
    <property type="molecule type" value="mRNA"/>
</dbReference>
<dbReference type="PIR" id="I46532">
    <property type="entry name" value="I46532"/>
</dbReference>
<dbReference type="RefSeq" id="NP_001075814.1">
    <property type="nucleotide sequence ID" value="NM_001082345.1"/>
</dbReference>
<dbReference type="SMR" id="Q28619"/>
<dbReference type="BioGRID" id="1172218">
    <property type="interactions" value="1"/>
</dbReference>
<dbReference type="FunCoup" id="Q28619">
    <property type="interactions" value="338"/>
</dbReference>
<dbReference type="IntAct" id="Q28619">
    <property type="interactions" value="3"/>
</dbReference>
<dbReference type="MINT" id="Q28619"/>
<dbReference type="STRING" id="9986.ENSOCUP00000001351"/>
<dbReference type="iPTMnet" id="Q28619"/>
<dbReference type="GeneID" id="100009196"/>
<dbReference type="KEGG" id="ocu:100009196"/>
<dbReference type="CTD" id="9368"/>
<dbReference type="InParanoid" id="Q28619"/>
<dbReference type="OrthoDB" id="10007415at2759"/>
<dbReference type="Proteomes" id="UP000001811">
    <property type="component" value="Unplaced"/>
</dbReference>
<dbReference type="GO" id="GO:0016324">
    <property type="term" value="C:apical plasma membrane"/>
    <property type="evidence" value="ECO:0007669"/>
    <property type="project" value="UniProtKB-SubCell"/>
</dbReference>
<dbReference type="GO" id="GO:0071944">
    <property type="term" value="C:cell periphery"/>
    <property type="evidence" value="ECO:0000250"/>
    <property type="project" value="UniProtKB"/>
</dbReference>
<dbReference type="GO" id="GO:0005737">
    <property type="term" value="C:cytoplasm"/>
    <property type="evidence" value="ECO:0000250"/>
    <property type="project" value="UniProtKB"/>
</dbReference>
<dbReference type="GO" id="GO:0012505">
    <property type="term" value="C:endomembrane system"/>
    <property type="evidence" value="ECO:0007669"/>
    <property type="project" value="UniProtKB-SubCell"/>
</dbReference>
<dbReference type="GO" id="GO:0030175">
    <property type="term" value="C:filopodium"/>
    <property type="evidence" value="ECO:0007669"/>
    <property type="project" value="UniProtKB-SubCell"/>
</dbReference>
<dbReference type="GO" id="GO:0016020">
    <property type="term" value="C:membrane"/>
    <property type="evidence" value="ECO:0000250"/>
    <property type="project" value="UniProtKB"/>
</dbReference>
<dbReference type="GO" id="GO:0005902">
    <property type="term" value="C:microvillus"/>
    <property type="evidence" value="ECO:0000250"/>
    <property type="project" value="UniProtKB"/>
</dbReference>
<dbReference type="GO" id="GO:0031528">
    <property type="term" value="C:microvillus membrane"/>
    <property type="evidence" value="ECO:0000250"/>
    <property type="project" value="UniProtKB"/>
</dbReference>
<dbReference type="GO" id="GO:0001726">
    <property type="term" value="C:ruffle"/>
    <property type="evidence" value="ECO:0007669"/>
    <property type="project" value="UniProtKB-SubCell"/>
</dbReference>
<dbReference type="GO" id="GO:0097225">
    <property type="term" value="C:sperm midpiece"/>
    <property type="evidence" value="ECO:0000250"/>
    <property type="project" value="UniProtKB"/>
</dbReference>
<dbReference type="GO" id="GO:0017081">
    <property type="term" value="F:chloride channel regulator activity"/>
    <property type="evidence" value="ECO:0000250"/>
    <property type="project" value="UniProtKB"/>
</dbReference>
<dbReference type="GO" id="GO:0043495">
    <property type="term" value="F:protein-membrane adaptor activity"/>
    <property type="evidence" value="ECO:0007669"/>
    <property type="project" value="TreeGrafter"/>
</dbReference>
<dbReference type="GO" id="GO:0005102">
    <property type="term" value="F:signaling receptor binding"/>
    <property type="evidence" value="ECO:0007669"/>
    <property type="project" value="TreeGrafter"/>
</dbReference>
<dbReference type="GO" id="GO:0032782">
    <property type="term" value="P:bile acid secretion"/>
    <property type="evidence" value="ECO:0000250"/>
    <property type="project" value="UniProtKB"/>
</dbReference>
<dbReference type="GO" id="GO:0034635">
    <property type="term" value="P:glutathione transport"/>
    <property type="evidence" value="ECO:0000250"/>
    <property type="project" value="UniProtKB"/>
</dbReference>
<dbReference type="GO" id="GO:2000146">
    <property type="term" value="P:negative regulation of cell motility"/>
    <property type="evidence" value="ECO:0000250"/>
    <property type="project" value="UniProtKB"/>
</dbReference>
<dbReference type="GO" id="GO:0051898">
    <property type="term" value="P:negative regulation of phosphatidylinositol 3-kinase/protein kinase B signal transduction"/>
    <property type="evidence" value="ECO:0000250"/>
    <property type="project" value="UniProtKB"/>
</dbReference>
<dbReference type="GO" id="GO:0010642">
    <property type="term" value="P:negative regulation of platelet-derived growth factor receptor signaling pathway"/>
    <property type="evidence" value="ECO:0000250"/>
    <property type="project" value="UniProtKB"/>
</dbReference>
<dbReference type="GO" id="GO:0072659">
    <property type="term" value="P:protein localization to plasma membrane"/>
    <property type="evidence" value="ECO:0007669"/>
    <property type="project" value="TreeGrafter"/>
</dbReference>
<dbReference type="GO" id="GO:0045859">
    <property type="term" value="P:regulation of protein kinase activity"/>
    <property type="evidence" value="ECO:0000250"/>
    <property type="project" value="UniProtKB"/>
</dbReference>
<dbReference type="GO" id="GO:0070293">
    <property type="term" value="P:renal absorption"/>
    <property type="evidence" value="ECO:0000250"/>
    <property type="project" value="UniProtKB"/>
</dbReference>
<dbReference type="GO" id="GO:0097291">
    <property type="term" value="P:renal phosphate ion absorption"/>
    <property type="evidence" value="ECO:0000250"/>
    <property type="project" value="UniProtKB"/>
</dbReference>
<dbReference type="GO" id="GO:0016055">
    <property type="term" value="P:Wnt signaling pathway"/>
    <property type="evidence" value="ECO:0007669"/>
    <property type="project" value="UniProtKB-KW"/>
</dbReference>
<dbReference type="CDD" id="cd06768">
    <property type="entry name" value="PDZ_NHERF-like"/>
    <property type="match status" value="2"/>
</dbReference>
<dbReference type="FunFam" id="2.30.42.10:FF:000068">
    <property type="entry name" value="Na(+)/H(+) exchange regulatory cofactor NHE-RF"/>
    <property type="match status" value="2"/>
</dbReference>
<dbReference type="Gene3D" id="2.30.42.10">
    <property type="match status" value="2"/>
</dbReference>
<dbReference type="InterPro" id="IPR015098">
    <property type="entry name" value="EBP50_C"/>
</dbReference>
<dbReference type="InterPro" id="IPR051067">
    <property type="entry name" value="NHER"/>
</dbReference>
<dbReference type="InterPro" id="IPR017300">
    <property type="entry name" value="NHERF-1/NHERF-2"/>
</dbReference>
<dbReference type="InterPro" id="IPR001478">
    <property type="entry name" value="PDZ"/>
</dbReference>
<dbReference type="InterPro" id="IPR036034">
    <property type="entry name" value="PDZ_sf"/>
</dbReference>
<dbReference type="PANTHER" id="PTHR14191:SF7">
    <property type="entry name" value="NA(+)_H(+) EXCHANGE REGULATORY COFACTOR NHE-RF1"/>
    <property type="match status" value="1"/>
</dbReference>
<dbReference type="PANTHER" id="PTHR14191">
    <property type="entry name" value="PDZ DOMAIN CONTAINING PROTEIN"/>
    <property type="match status" value="1"/>
</dbReference>
<dbReference type="Pfam" id="PF09007">
    <property type="entry name" value="EBP50_C"/>
    <property type="match status" value="1"/>
</dbReference>
<dbReference type="Pfam" id="PF00595">
    <property type="entry name" value="PDZ"/>
    <property type="match status" value="2"/>
</dbReference>
<dbReference type="PIRSF" id="PIRSF037866">
    <property type="entry name" value="EBP50"/>
    <property type="match status" value="1"/>
</dbReference>
<dbReference type="SMART" id="SM00228">
    <property type="entry name" value="PDZ"/>
    <property type="match status" value="2"/>
</dbReference>
<dbReference type="SUPFAM" id="SSF50156">
    <property type="entry name" value="PDZ domain-like"/>
    <property type="match status" value="2"/>
</dbReference>
<dbReference type="PROSITE" id="PS50106">
    <property type="entry name" value="PDZ"/>
    <property type="match status" value="2"/>
</dbReference>